<name>ATPG_STRP8</name>
<keyword id="KW-0066">ATP synthesis</keyword>
<keyword id="KW-1003">Cell membrane</keyword>
<keyword id="KW-0139">CF(1)</keyword>
<keyword id="KW-0375">Hydrogen ion transport</keyword>
<keyword id="KW-0406">Ion transport</keyword>
<keyword id="KW-0472">Membrane</keyword>
<keyword id="KW-0813">Transport</keyword>
<accession>Q7CND4</accession>
<evidence type="ECO:0000255" key="1">
    <source>
        <dbReference type="HAMAP-Rule" id="MF_00815"/>
    </source>
</evidence>
<sequence>MAGSLSEIKAKIISTEKTSKITSAMRMVSSAKLVKSEQAARDFQIYASKIRQITTDLLKSELTIGSDNPMLVSRPVKKTGYIVITSDKGLVGGYNSKILKSVMDMITEYHADGDYEIISIGSVGSDFFKARGMNVAFELRGLADQPSFEQVRQIISQSVDMFVNEIFDELYVCYNHHVNSLTSQVRVQQMLPISDLVADEAAEEGVTGFELEPNRHDILDQLLPQFTESLIYGAIIDAKTAEHAAGMTAMQTATDNAKNVINDLTIQYNRARQAAITQEITEIVAGANALE</sequence>
<gene>
    <name evidence="1" type="primary">atpG</name>
    <name type="ordered locus">spyM18_0817</name>
</gene>
<reference key="1">
    <citation type="journal article" date="2002" name="Proc. Natl. Acad. Sci. U.S.A.">
        <title>Genome sequence and comparative microarray analysis of serotype M18 group A Streptococcus strains associated with acute rheumatic fever outbreaks.</title>
        <authorList>
            <person name="Smoot J.C."/>
            <person name="Barbian K.D."/>
            <person name="Van Gompel J.J."/>
            <person name="Smoot L.M."/>
            <person name="Chaussee M.S."/>
            <person name="Sylva G.L."/>
            <person name="Sturdevant D.E."/>
            <person name="Ricklefs S.M."/>
            <person name="Porcella S.F."/>
            <person name="Parkins L.D."/>
            <person name="Beres S.B."/>
            <person name="Campbell D.S."/>
            <person name="Smith T.M."/>
            <person name="Zhang Q."/>
            <person name="Kapur V."/>
            <person name="Daly J.A."/>
            <person name="Veasy L.G."/>
            <person name="Musser J.M."/>
        </authorList>
    </citation>
    <scope>NUCLEOTIDE SEQUENCE [LARGE SCALE GENOMIC DNA]</scope>
    <source>
        <strain>MGAS8232</strain>
    </source>
</reference>
<dbReference type="EMBL" id="AE009949">
    <property type="protein sequence ID" value="AAL97481.1"/>
    <property type="molecule type" value="Genomic_DNA"/>
</dbReference>
<dbReference type="RefSeq" id="WP_002985236.1">
    <property type="nucleotide sequence ID" value="NC_003485.1"/>
</dbReference>
<dbReference type="SMR" id="Q7CND4"/>
<dbReference type="KEGG" id="spm:spyM18_0817"/>
<dbReference type="HOGENOM" id="CLU_050669_0_1_9"/>
<dbReference type="GO" id="GO:0005886">
    <property type="term" value="C:plasma membrane"/>
    <property type="evidence" value="ECO:0007669"/>
    <property type="project" value="UniProtKB-SubCell"/>
</dbReference>
<dbReference type="GO" id="GO:0045259">
    <property type="term" value="C:proton-transporting ATP synthase complex"/>
    <property type="evidence" value="ECO:0007669"/>
    <property type="project" value="UniProtKB-KW"/>
</dbReference>
<dbReference type="GO" id="GO:0005524">
    <property type="term" value="F:ATP binding"/>
    <property type="evidence" value="ECO:0007669"/>
    <property type="project" value="UniProtKB-UniRule"/>
</dbReference>
<dbReference type="GO" id="GO:0046933">
    <property type="term" value="F:proton-transporting ATP synthase activity, rotational mechanism"/>
    <property type="evidence" value="ECO:0007669"/>
    <property type="project" value="UniProtKB-UniRule"/>
</dbReference>
<dbReference type="GO" id="GO:0042777">
    <property type="term" value="P:proton motive force-driven plasma membrane ATP synthesis"/>
    <property type="evidence" value="ECO:0007669"/>
    <property type="project" value="UniProtKB-UniRule"/>
</dbReference>
<dbReference type="CDD" id="cd12151">
    <property type="entry name" value="F1-ATPase_gamma"/>
    <property type="match status" value="1"/>
</dbReference>
<dbReference type="FunFam" id="3.40.1380.10:FF:000002">
    <property type="entry name" value="ATP synthase gamma chain"/>
    <property type="match status" value="1"/>
</dbReference>
<dbReference type="Gene3D" id="3.40.1380.10">
    <property type="match status" value="1"/>
</dbReference>
<dbReference type="Gene3D" id="1.10.287.80">
    <property type="entry name" value="ATP synthase, gamma subunit, helix hairpin domain"/>
    <property type="match status" value="1"/>
</dbReference>
<dbReference type="HAMAP" id="MF_00815">
    <property type="entry name" value="ATP_synth_gamma_bact"/>
    <property type="match status" value="1"/>
</dbReference>
<dbReference type="InterPro" id="IPR035968">
    <property type="entry name" value="ATP_synth_F1_ATPase_gsu"/>
</dbReference>
<dbReference type="InterPro" id="IPR000131">
    <property type="entry name" value="ATP_synth_F1_gsu"/>
</dbReference>
<dbReference type="InterPro" id="IPR023632">
    <property type="entry name" value="ATP_synth_F1_gsu_CS"/>
</dbReference>
<dbReference type="NCBIfam" id="TIGR01146">
    <property type="entry name" value="ATPsyn_F1gamma"/>
    <property type="match status" value="1"/>
</dbReference>
<dbReference type="NCBIfam" id="NF004147">
    <property type="entry name" value="PRK05621.2-1"/>
    <property type="match status" value="1"/>
</dbReference>
<dbReference type="PANTHER" id="PTHR11693">
    <property type="entry name" value="ATP SYNTHASE GAMMA CHAIN"/>
    <property type="match status" value="1"/>
</dbReference>
<dbReference type="PANTHER" id="PTHR11693:SF22">
    <property type="entry name" value="ATP SYNTHASE SUBUNIT GAMMA, MITOCHONDRIAL"/>
    <property type="match status" value="1"/>
</dbReference>
<dbReference type="Pfam" id="PF00231">
    <property type="entry name" value="ATP-synt"/>
    <property type="match status" value="1"/>
</dbReference>
<dbReference type="PRINTS" id="PR00126">
    <property type="entry name" value="ATPASEGAMMA"/>
</dbReference>
<dbReference type="SUPFAM" id="SSF52943">
    <property type="entry name" value="ATP synthase (F1-ATPase), gamma subunit"/>
    <property type="match status" value="1"/>
</dbReference>
<dbReference type="PROSITE" id="PS00153">
    <property type="entry name" value="ATPASE_GAMMA"/>
    <property type="match status" value="1"/>
</dbReference>
<feature type="chain" id="PRO_0000073390" description="ATP synthase gamma chain">
    <location>
        <begin position="1"/>
        <end position="291"/>
    </location>
</feature>
<proteinExistence type="inferred from homology"/>
<comment type="function">
    <text evidence="1">Produces ATP from ADP in the presence of a proton gradient across the membrane. The gamma chain is believed to be important in regulating ATPase activity and the flow of protons through the CF(0) complex.</text>
</comment>
<comment type="subunit">
    <text evidence="1">F-type ATPases have 2 components, CF(1) - the catalytic core - and CF(0) - the membrane proton channel. CF(1) has five subunits: alpha(3), beta(3), gamma(1), delta(1), epsilon(1). CF(0) has three main subunits: a, b and c.</text>
</comment>
<comment type="subcellular location">
    <subcellularLocation>
        <location evidence="1">Cell membrane</location>
        <topology evidence="1">Peripheral membrane protein</topology>
    </subcellularLocation>
</comment>
<comment type="similarity">
    <text evidence="1">Belongs to the ATPase gamma chain family.</text>
</comment>
<protein>
    <recommendedName>
        <fullName evidence="1">ATP synthase gamma chain</fullName>
    </recommendedName>
    <alternativeName>
        <fullName evidence="1">ATP synthase F1 sector gamma subunit</fullName>
    </alternativeName>
    <alternativeName>
        <fullName evidence="1">F-ATPase gamma subunit</fullName>
    </alternativeName>
</protein>
<organism>
    <name type="scientific">Streptococcus pyogenes serotype M18 (strain MGAS8232)</name>
    <dbReference type="NCBI Taxonomy" id="186103"/>
    <lineage>
        <taxon>Bacteria</taxon>
        <taxon>Bacillati</taxon>
        <taxon>Bacillota</taxon>
        <taxon>Bacilli</taxon>
        <taxon>Lactobacillales</taxon>
        <taxon>Streptococcaceae</taxon>
        <taxon>Streptococcus</taxon>
    </lineage>
</organism>